<sequence>MLLIALNTDLRTTGKKFLPNDINGGKVEKVNGPCVLQIQKIRNISAPKDNEESQAAPRMLRLQLTDGHTSCTAIELNYLSKISLNTPPGTKIKLLGTIEVKNGYLLLDDTNTVVLGGEVEHLIEKWELQRSLSKHSRSNIGIEGGPPPFVPFGQRCASVASVDSKELDSRKTLQASSVTKPVGENDEFEKQRTAAIAEVAKSKETKTFGGGGNAGSNLNPGAGGSRNKEVFQKEKIIRAEGKSEGVYRELVDEKALRHITEMGFSKDAARQALMDHSNNVEAALNSLLTGNKSKPVQGPPARGKGKGRGRTRAEEDDELTSARPSAPSTLFDFLESKMGSFSIEDHKLQSQSQSQVHQKPLNLEQNGIKDYNHKDYNQPRQFTRNDTRAPRNEKPPRFQKEIQASRQYEGNGPPKSRGSEKQSSSVAEQWMEERNKCERGYPRNDRLKDFSHLPSSHQNEGSYKKSYTNPMQGRGMKGGNHTEVKEEFHHQNSNTEGSHQKRGKKDDQRYNSEFYTDRRARTGNTETFTNIPNEKCFSANNELSNFQTILIKDGANDLSNGEVDQKARRFGPIKPIGTNLNSSHEDKSKMFSYNNAKKRSGPIKQERPLEAVYSGFSWRPGDECLALYWEDNKYYRAEVEALHSSGTTAVVKFSDYGNYEEVLLENIRPIQAEAWEEEGDFGDFRRGGDGQPRRSTRPTQQFYQPPRARN</sequence>
<proteinExistence type="evidence at transcript level"/>
<comment type="function">
    <text evidence="2">Scaffolding protein that specifically recognizes and binds dimethylarginine-containing proteins. Plays a role in the regulation of translation of target mRNAs by binding Arg/Gly-rich motifs (GAR) in dimethylarginine-containing proteins. In nucleus, acts as a coactivator: recognizes and binds asymmetric dimethylation on the core histone tails associated with transcriptional activation (H3R17me2a and H4R3me2a) and recruits proteins at these arginine-methylated loci. In cytoplasm, acts as an antiviral factor that participates in the assembly of stress granules together with G3BP1.</text>
</comment>
<comment type="subunit">
    <text evidence="2">Component of mRNA stress granules.</text>
</comment>
<comment type="subcellular location">
    <subcellularLocation>
        <location evidence="2">Cytoplasm</location>
    </subcellularLocation>
    <subcellularLocation>
        <location evidence="2">Nucleus</location>
    </subcellularLocation>
    <text evidence="2">Predominantly cytoplasmic. Associated with actively translating polyribosomes. Component of stress granules.</text>
</comment>
<comment type="domain">
    <text evidence="1">The Tudor domain specifically recognizes and binds asymmetric dimethylation of histone H3 'Arg-17' (H3R17me2a) and histones H4 'Arg-3', 2 tags for epigenetic transcriptional activation.</text>
</comment>
<comment type="sequence caution" evidence="6">
    <conflict type="erroneous initiation">
        <sequence resource="EMBL-CDS" id="AAH64868"/>
    </conflict>
</comment>
<dbReference type="EMBL" id="BC064868">
    <property type="protein sequence ID" value="AAH64868.1"/>
    <property type="status" value="ALT_INIT"/>
    <property type="molecule type" value="mRNA"/>
</dbReference>
<dbReference type="RefSeq" id="NP_989385.1">
    <property type="nucleotide sequence ID" value="NM_204054.1"/>
</dbReference>
<dbReference type="SMR" id="Q6P1U3"/>
<dbReference type="FunCoup" id="Q6P1U3">
    <property type="interactions" value="3780"/>
</dbReference>
<dbReference type="STRING" id="8364.ENSXETP00000024710"/>
<dbReference type="PaxDb" id="8364-ENSXETP00000063638"/>
<dbReference type="GeneID" id="395019"/>
<dbReference type="KEGG" id="xtr:395019"/>
<dbReference type="CTD" id="81550"/>
<dbReference type="eggNOG" id="KOG3683">
    <property type="taxonomic scope" value="Eukaryota"/>
</dbReference>
<dbReference type="InParanoid" id="Q6P1U3"/>
<dbReference type="OrthoDB" id="434939at2759"/>
<dbReference type="Proteomes" id="UP000008143">
    <property type="component" value="Chromosome 2"/>
</dbReference>
<dbReference type="Bgee" id="ENSXETG00000012815">
    <property type="expression patterns" value="Expressed in testis and 12 other cell types or tissues"/>
</dbReference>
<dbReference type="ExpressionAtlas" id="Q6P1U3">
    <property type="expression patterns" value="baseline"/>
</dbReference>
<dbReference type="GO" id="GO:0005737">
    <property type="term" value="C:cytoplasm"/>
    <property type="evidence" value="ECO:0007669"/>
    <property type="project" value="UniProtKB-SubCell"/>
</dbReference>
<dbReference type="GO" id="GO:0005634">
    <property type="term" value="C:nucleus"/>
    <property type="evidence" value="ECO:0000250"/>
    <property type="project" value="UniProtKB"/>
</dbReference>
<dbReference type="GO" id="GO:0003682">
    <property type="term" value="F:chromatin binding"/>
    <property type="evidence" value="ECO:0000250"/>
    <property type="project" value="UniProtKB"/>
</dbReference>
<dbReference type="GO" id="GO:0140006">
    <property type="term" value="F:histone H3 reader activity"/>
    <property type="evidence" value="ECO:0000250"/>
    <property type="project" value="UniProtKB"/>
</dbReference>
<dbReference type="GO" id="GO:0003713">
    <property type="term" value="F:transcription coactivator activity"/>
    <property type="evidence" value="ECO:0000250"/>
    <property type="project" value="UniProtKB"/>
</dbReference>
<dbReference type="CDD" id="cd20413">
    <property type="entry name" value="Tudor_TDRD3"/>
    <property type="match status" value="1"/>
</dbReference>
<dbReference type="CDD" id="cd14282">
    <property type="entry name" value="UBA_TDRD3"/>
    <property type="match status" value="1"/>
</dbReference>
<dbReference type="FunFam" id="2.40.50.770:FF:000001">
    <property type="entry name" value="Tudor domain-containing protein 3"/>
    <property type="match status" value="1"/>
</dbReference>
<dbReference type="FunFam" id="1.10.8.10:FF:000038">
    <property type="entry name" value="tudor domain-containing protein 3 isoform X1"/>
    <property type="match status" value="1"/>
</dbReference>
<dbReference type="FunFam" id="2.30.30.140:FF:000046">
    <property type="entry name" value="tudor domain-containing protein 3 isoform X1"/>
    <property type="match status" value="1"/>
</dbReference>
<dbReference type="Gene3D" id="2.30.30.140">
    <property type="match status" value="1"/>
</dbReference>
<dbReference type="Gene3D" id="1.10.8.10">
    <property type="entry name" value="DNA helicase RuvA subunit, C-terminal domain"/>
    <property type="match status" value="1"/>
</dbReference>
<dbReference type="Gene3D" id="2.40.50.770">
    <property type="entry name" value="RecQ-mediated genome instability protein Rmi1, C-terminal domain"/>
    <property type="match status" value="1"/>
</dbReference>
<dbReference type="InterPro" id="IPR042470">
    <property type="entry name" value="RMI1_N_C_sf"/>
</dbReference>
<dbReference type="InterPro" id="IPR013894">
    <property type="entry name" value="RMI1_OB"/>
</dbReference>
<dbReference type="InterPro" id="IPR002999">
    <property type="entry name" value="Tudor"/>
</dbReference>
<dbReference type="InterPro" id="IPR047379">
    <property type="entry name" value="Tudor_TDRD3"/>
</dbReference>
<dbReference type="InterPro" id="IPR015940">
    <property type="entry name" value="UBA"/>
</dbReference>
<dbReference type="InterPro" id="IPR009060">
    <property type="entry name" value="UBA-like_sf"/>
</dbReference>
<dbReference type="InterPro" id="IPR041915">
    <property type="entry name" value="UBA_TDRD3"/>
</dbReference>
<dbReference type="PANTHER" id="PTHR13681">
    <property type="entry name" value="SURVIVAL OF MOTOR NEURON-RELATED-SPLICING FACTOR 30-RELATED"/>
    <property type="match status" value="1"/>
</dbReference>
<dbReference type="PANTHER" id="PTHR13681:SF24">
    <property type="entry name" value="TUDOR DOMAIN-CONTAINING PROTEIN 3"/>
    <property type="match status" value="1"/>
</dbReference>
<dbReference type="Pfam" id="PF08585">
    <property type="entry name" value="RMI1_N_C"/>
    <property type="match status" value="1"/>
</dbReference>
<dbReference type="Pfam" id="PF00567">
    <property type="entry name" value="TUDOR"/>
    <property type="match status" value="1"/>
</dbReference>
<dbReference type="Pfam" id="PF22562">
    <property type="entry name" value="UBA_7"/>
    <property type="match status" value="1"/>
</dbReference>
<dbReference type="SMART" id="SM01161">
    <property type="entry name" value="DUF1767"/>
    <property type="match status" value="1"/>
</dbReference>
<dbReference type="SMART" id="SM00333">
    <property type="entry name" value="TUDOR"/>
    <property type="match status" value="1"/>
</dbReference>
<dbReference type="SMART" id="SM00165">
    <property type="entry name" value="UBA"/>
    <property type="match status" value="1"/>
</dbReference>
<dbReference type="SUPFAM" id="SSF63748">
    <property type="entry name" value="Tudor/PWWP/MBT"/>
    <property type="match status" value="1"/>
</dbReference>
<dbReference type="SUPFAM" id="SSF46934">
    <property type="entry name" value="UBA-like"/>
    <property type="match status" value="1"/>
</dbReference>
<dbReference type="PROSITE" id="PS50304">
    <property type="entry name" value="TUDOR"/>
    <property type="match status" value="1"/>
</dbReference>
<dbReference type="PROSITE" id="PS50030">
    <property type="entry name" value="UBA"/>
    <property type="match status" value="1"/>
</dbReference>
<feature type="chain" id="PRO_0000367250" description="Tudor domain-containing protein 3">
    <location>
        <begin position="1"/>
        <end position="710"/>
    </location>
</feature>
<feature type="domain" description="UBA" evidence="4">
    <location>
        <begin position="250"/>
        <end position="290"/>
    </location>
</feature>
<feature type="domain" description="Tudor" evidence="3">
    <location>
        <begin position="617"/>
        <end position="677"/>
    </location>
</feature>
<feature type="region of interest" description="Disordered" evidence="5">
    <location>
        <begin position="206"/>
        <end position="227"/>
    </location>
</feature>
<feature type="region of interest" description="Disordered" evidence="5">
    <location>
        <begin position="288"/>
        <end position="328"/>
    </location>
</feature>
<feature type="region of interest" description="Disordered" evidence="5">
    <location>
        <begin position="369"/>
        <end position="515"/>
    </location>
</feature>
<feature type="region of interest" description="Disordered" evidence="5">
    <location>
        <begin position="678"/>
        <end position="710"/>
    </location>
</feature>
<feature type="compositionally biased region" description="Basic and acidic residues" evidence="5">
    <location>
        <begin position="370"/>
        <end position="400"/>
    </location>
</feature>
<feature type="compositionally biased region" description="Basic and acidic residues" evidence="5">
    <location>
        <begin position="431"/>
        <end position="451"/>
    </location>
</feature>
<feature type="compositionally biased region" description="Polar residues" evidence="5">
    <location>
        <begin position="453"/>
        <end position="471"/>
    </location>
</feature>
<feature type="compositionally biased region" description="Basic and acidic residues" evidence="5">
    <location>
        <begin position="480"/>
        <end position="490"/>
    </location>
</feature>
<feature type="compositionally biased region" description="Basic and acidic residues" evidence="5">
    <location>
        <begin position="504"/>
        <end position="515"/>
    </location>
</feature>
<feature type="compositionally biased region" description="Basic and acidic residues" evidence="5">
    <location>
        <begin position="682"/>
        <end position="692"/>
    </location>
</feature>
<evidence type="ECO:0000250" key="1"/>
<evidence type="ECO:0000250" key="2">
    <source>
        <dbReference type="UniProtKB" id="Q9H7E2"/>
    </source>
</evidence>
<evidence type="ECO:0000255" key="3">
    <source>
        <dbReference type="PROSITE-ProRule" id="PRU00211"/>
    </source>
</evidence>
<evidence type="ECO:0000255" key="4">
    <source>
        <dbReference type="PROSITE-ProRule" id="PRU00212"/>
    </source>
</evidence>
<evidence type="ECO:0000256" key="5">
    <source>
        <dbReference type="SAM" id="MobiDB-lite"/>
    </source>
</evidence>
<evidence type="ECO:0000305" key="6"/>
<keyword id="KW-0156">Chromatin regulator</keyword>
<keyword id="KW-0963">Cytoplasm</keyword>
<keyword id="KW-0539">Nucleus</keyword>
<keyword id="KW-1185">Reference proteome</keyword>
<organism>
    <name type="scientific">Xenopus tropicalis</name>
    <name type="common">Western clawed frog</name>
    <name type="synonym">Silurana tropicalis</name>
    <dbReference type="NCBI Taxonomy" id="8364"/>
    <lineage>
        <taxon>Eukaryota</taxon>
        <taxon>Metazoa</taxon>
        <taxon>Chordata</taxon>
        <taxon>Craniata</taxon>
        <taxon>Vertebrata</taxon>
        <taxon>Euteleostomi</taxon>
        <taxon>Amphibia</taxon>
        <taxon>Batrachia</taxon>
        <taxon>Anura</taxon>
        <taxon>Pipoidea</taxon>
        <taxon>Pipidae</taxon>
        <taxon>Xenopodinae</taxon>
        <taxon>Xenopus</taxon>
        <taxon>Silurana</taxon>
    </lineage>
</organism>
<protein>
    <recommendedName>
        <fullName>Tudor domain-containing protein 3</fullName>
    </recommendedName>
</protein>
<gene>
    <name type="primary">tdrd3</name>
</gene>
<reference key="1">
    <citation type="submission" date="2004-01" db="EMBL/GenBank/DDBJ databases">
        <authorList>
            <consortium name="NIH - Xenopus Gene Collection (XGC) project"/>
        </authorList>
    </citation>
    <scope>NUCLEOTIDE SEQUENCE [LARGE SCALE MRNA]</scope>
    <source>
        <tissue>Embryo</tissue>
    </source>
</reference>
<name>TDRD3_XENTR</name>
<accession>Q6P1U3</accession>